<feature type="chain" id="PRO_0000376502" description="Probable cell division protein WhiA">
    <location>
        <begin position="1"/>
        <end position="313"/>
    </location>
</feature>
<feature type="DNA-binding region" description="H-T-H motif" evidence="1">
    <location>
        <begin position="277"/>
        <end position="311"/>
    </location>
</feature>
<accession>Q74K85</accession>
<protein>
    <recommendedName>
        <fullName evidence="1">Probable cell division protein WhiA</fullName>
    </recommendedName>
</protein>
<name>WHIA_LACJO</name>
<sequence length="313" mass="35756">MVSYASDVKKELTSLPVHPEHAKAELAAFLRMNGVLSLHDHQFSLDITTENPAIARRIFSLIKTAYGIEPLLIVSKKMKLKKNYQYLVRLQKQVHEILTDLEIFDSNNGLITGIPEKIMSSEQRAMSYLRGAFLASGSVNNPETSRYHLEIYSLYEDHNQDLLKLMNNFFYLNAKETRRRSGYIVYLKEAEKIGDFLHIVGAVNAMLAFEDLRIMRDMRNSVNRLVNCDTANLKKTANAAAKQVEDIQLIEEKFGLENLPEKLTVLARFRLTHPELSLKEVAAQVPDGPISKSGVNHRFQKIREIAKQLKEEN</sequence>
<organism>
    <name type="scientific">Lactobacillus johnsonii (strain CNCM I-12250 / La1 / NCC 533)</name>
    <dbReference type="NCBI Taxonomy" id="257314"/>
    <lineage>
        <taxon>Bacteria</taxon>
        <taxon>Bacillati</taxon>
        <taxon>Bacillota</taxon>
        <taxon>Bacilli</taxon>
        <taxon>Lactobacillales</taxon>
        <taxon>Lactobacillaceae</taxon>
        <taxon>Lactobacillus</taxon>
    </lineage>
</organism>
<keyword id="KW-0131">Cell cycle</keyword>
<keyword id="KW-0132">Cell division</keyword>
<keyword id="KW-0238">DNA-binding</keyword>
<proteinExistence type="inferred from homology"/>
<evidence type="ECO:0000255" key="1">
    <source>
        <dbReference type="HAMAP-Rule" id="MF_01420"/>
    </source>
</evidence>
<gene>
    <name evidence="1" type="primary">whiA</name>
    <name type="ordered locus">LJ_0868</name>
</gene>
<reference key="1">
    <citation type="journal article" date="2004" name="Proc. Natl. Acad. Sci. U.S.A.">
        <title>The genome sequence of the probiotic intestinal bacterium Lactobacillus johnsonii NCC 533.</title>
        <authorList>
            <person name="Pridmore R.D."/>
            <person name="Berger B."/>
            <person name="Desiere F."/>
            <person name="Vilanova D."/>
            <person name="Barretto C."/>
            <person name="Pittet A.-C."/>
            <person name="Zwahlen M.-C."/>
            <person name="Rouvet M."/>
            <person name="Altermann E."/>
            <person name="Barrangou R."/>
            <person name="Mollet B."/>
            <person name="Mercenier A."/>
            <person name="Klaenhammer T."/>
            <person name="Arigoni F."/>
            <person name="Schell M.A."/>
        </authorList>
    </citation>
    <scope>NUCLEOTIDE SEQUENCE [LARGE SCALE GENOMIC DNA]</scope>
    <source>
        <strain>CNCM I-1225 / La1 / NCC 533</strain>
    </source>
</reference>
<dbReference type="EMBL" id="AE017198">
    <property type="protein sequence ID" value="AAS08689.1"/>
    <property type="molecule type" value="Genomic_DNA"/>
</dbReference>
<dbReference type="RefSeq" id="WP_004893933.1">
    <property type="nucleotide sequence ID" value="NC_005362.1"/>
</dbReference>
<dbReference type="SMR" id="Q74K85"/>
<dbReference type="GeneID" id="83570735"/>
<dbReference type="KEGG" id="ljo:LJ_0868"/>
<dbReference type="eggNOG" id="COG1481">
    <property type="taxonomic scope" value="Bacteria"/>
</dbReference>
<dbReference type="HOGENOM" id="CLU_053282_1_0_9"/>
<dbReference type="Proteomes" id="UP000000581">
    <property type="component" value="Chromosome"/>
</dbReference>
<dbReference type="GO" id="GO:0003677">
    <property type="term" value="F:DNA binding"/>
    <property type="evidence" value="ECO:0007669"/>
    <property type="project" value="UniProtKB-UniRule"/>
</dbReference>
<dbReference type="GO" id="GO:0051301">
    <property type="term" value="P:cell division"/>
    <property type="evidence" value="ECO:0007669"/>
    <property type="project" value="UniProtKB-UniRule"/>
</dbReference>
<dbReference type="GO" id="GO:0043937">
    <property type="term" value="P:regulation of sporulation"/>
    <property type="evidence" value="ECO:0007669"/>
    <property type="project" value="InterPro"/>
</dbReference>
<dbReference type="Gene3D" id="3.10.28.10">
    <property type="entry name" value="Homing endonucleases"/>
    <property type="match status" value="1"/>
</dbReference>
<dbReference type="HAMAP" id="MF_01420">
    <property type="entry name" value="HTH_type_WhiA"/>
    <property type="match status" value="1"/>
</dbReference>
<dbReference type="InterPro" id="IPR027434">
    <property type="entry name" value="Homing_endonucl"/>
</dbReference>
<dbReference type="InterPro" id="IPR018478">
    <property type="entry name" value="Sporu_reg_WhiA_N_dom"/>
</dbReference>
<dbReference type="InterPro" id="IPR003802">
    <property type="entry name" value="Sporulation_regulator_WhiA"/>
</dbReference>
<dbReference type="InterPro" id="IPR023054">
    <property type="entry name" value="Sporulation_regulator_WhiA_C"/>
</dbReference>
<dbReference type="InterPro" id="IPR039518">
    <property type="entry name" value="WhiA_LAGLIDADG_dom"/>
</dbReference>
<dbReference type="NCBIfam" id="TIGR00647">
    <property type="entry name" value="DNA_bind_WhiA"/>
    <property type="match status" value="1"/>
</dbReference>
<dbReference type="PANTHER" id="PTHR37307">
    <property type="entry name" value="CELL DIVISION PROTEIN WHIA-RELATED"/>
    <property type="match status" value="1"/>
</dbReference>
<dbReference type="PANTHER" id="PTHR37307:SF1">
    <property type="entry name" value="CELL DIVISION PROTEIN WHIA-RELATED"/>
    <property type="match status" value="1"/>
</dbReference>
<dbReference type="Pfam" id="PF02650">
    <property type="entry name" value="HTH_WhiA"/>
    <property type="match status" value="1"/>
</dbReference>
<dbReference type="Pfam" id="PF14527">
    <property type="entry name" value="LAGLIDADG_WhiA"/>
    <property type="match status" value="1"/>
</dbReference>
<dbReference type="Pfam" id="PF10298">
    <property type="entry name" value="WhiA_N"/>
    <property type="match status" value="1"/>
</dbReference>
<dbReference type="SUPFAM" id="SSF55608">
    <property type="entry name" value="Homing endonucleases"/>
    <property type="match status" value="1"/>
</dbReference>
<comment type="function">
    <text evidence="1">Involved in cell division and chromosome segregation.</text>
</comment>
<comment type="similarity">
    <text evidence="1">Belongs to the WhiA family.</text>
</comment>